<gene>
    <name evidence="1" type="primary">ppa</name>
    <name type="ordered locus">ML0210</name>
    <name type="ORF">MLCB2548.21</name>
</gene>
<dbReference type="EC" id="3.6.1.1" evidence="1"/>
<dbReference type="EMBL" id="AL023093">
    <property type="protein sequence ID" value="CAA18808.1"/>
    <property type="molecule type" value="Genomic_DNA"/>
</dbReference>
<dbReference type="EMBL" id="AL583917">
    <property type="protein sequence ID" value="CAC29718.1"/>
    <property type="molecule type" value="Genomic_DNA"/>
</dbReference>
<dbReference type="PIR" id="B86935">
    <property type="entry name" value="B86935"/>
</dbReference>
<dbReference type="RefSeq" id="NP_301276.1">
    <property type="nucleotide sequence ID" value="NC_002677.1"/>
</dbReference>
<dbReference type="RefSeq" id="WP_010907600.1">
    <property type="nucleotide sequence ID" value="NC_002677.1"/>
</dbReference>
<dbReference type="PDB" id="4ECP">
    <property type="method" value="X-ray"/>
    <property type="resolution" value="1.80 A"/>
    <property type="chains" value="A/B=2-162"/>
</dbReference>
<dbReference type="PDBsum" id="4ECP"/>
<dbReference type="SMR" id="O69540"/>
<dbReference type="STRING" id="272631.gene:17574027"/>
<dbReference type="KEGG" id="mle:ML0210"/>
<dbReference type="PATRIC" id="fig|272631.5.peg.335"/>
<dbReference type="Leproma" id="ML0210"/>
<dbReference type="eggNOG" id="COG0221">
    <property type="taxonomic scope" value="Bacteria"/>
</dbReference>
<dbReference type="HOGENOM" id="CLU_073198_1_1_11"/>
<dbReference type="OrthoDB" id="5187599at2"/>
<dbReference type="EvolutionaryTrace" id="O69540"/>
<dbReference type="Proteomes" id="UP000000806">
    <property type="component" value="Chromosome"/>
</dbReference>
<dbReference type="GO" id="GO:0005737">
    <property type="term" value="C:cytoplasm"/>
    <property type="evidence" value="ECO:0007669"/>
    <property type="project" value="UniProtKB-SubCell"/>
</dbReference>
<dbReference type="GO" id="GO:0004427">
    <property type="term" value="F:inorganic diphosphate phosphatase activity"/>
    <property type="evidence" value="ECO:0007669"/>
    <property type="project" value="UniProtKB-UniRule"/>
</dbReference>
<dbReference type="GO" id="GO:0000287">
    <property type="term" value="F:magnesium ion binding"/>
    <property type="evidence" value="ECO:0007669"/>
    <property type="project" value="UniProtKB-UniRule"/>
</dbReference>
<dbReference type="GO" id="GO:0006796">
    <property type="term" value="P:phosphate-containing compound metabolic process"/>
    <property type="evidence" value="ECO:0007669"/>
    <property type="project" value="InterPro"/>
</dbReference>
<dbReference type="CDD" id="cd00412">
    <property type="entry name" value="pyrophosphatase"/>
    <property type="match status" value="1"/>
</dbReference>
<dbReference type="FunFam" id="3.90.80.10:FF:000003">
    <property type="entry name" value="Inorganic pyrophosphatase"/>
    <property type="match status" value="1"/>
</dbReference>
<dbReference type="Gene3D" id="3.90.80.10">
    <property type="entry name" value="Inorganic pyrophosphatase"/>
    <property type="match status" value="1"/>
</dbReference>
<dbReference type="HAMAP" id="MF_00209">
    <property type="entry name" value="Inorganic_PPase"/>
    <property type="match status" value="1"/>
</dbReference>
<dbReference type="InterPro" id="IPR008162">
    <property type="entry name" value="Pyrophosphatase"/>
</dbReference>
<dbReference type="InterPro" id="IPR036649">
    <property type="entry name" value="Pyrophosphatase_sf"/>
</dbReference>
<dbReference type="PANTHER" id="PTHR10286">
    <property type="entry name" value="INORGANIC PYROPHOSPHATASE"/>
    <property type="match status" value="1"/>
</dbReference>
<dbReference type="Pfam" id="PF00719">
    <property type="entry name" value="Pyrophosphatase"/>
    <property type="match status" value="1"/>
</dbReference>
<dbReference type="SUPFAM" id="SSF50324">
    <property type="entry name" value="Inorganic pyrophosphatase"/>
    <property type="match status" value="1"/>
</dbReference>
<dbReference type="PROSITE" id="PS00387">
    <property type="entry name" value="PPASE"/>
    <property type="match status" value="1"/>
</dbReference>
<name>IPYR_MYCLE</name>
<evidence type="ECO:0000255" key="1">
    <source>
        <dbReference type="HAMAP-Rule" id="MF_00209"/>
    </source>
</evidence>
<evidence type="ECO:0007829" key="2">
    <source>
        <dbReference type="PDB" id="4ECP"/>
    </source>
</evidence>
<keyword id="KW-0002">3D-structure</keyword>
<keyword id="KW-0963">Cytoplasm</keyword>
<keyword id="KW-0378">Hydrolase</keyword>
<keyword id="KW-0460">Magnesium</keyword>
<keyword id="KW-0479">Metal-binding</keyword>
<keyword id="KW-1185">Reference proteome</keyword>
<accession>O69540</accession>
<feature type="chain" id="PRO_0000137511" description="Inorganic pyrophosphatase">
    <location>
        <begin position="1"/>
        <end position="162"/>
    </location>
</feature>
<feature type="active site" description="Proton acceptor" evidence="1">
    <location>
        <position position="89"/>
    </location>
</feature>
<feature type="binding site" evidence="1">
    <location>
        <position position="8"/>
    </location>
    <ligand>
        <name>Mg(2+)</name>
        <dbReference type="ChEBI" id="CHEBI:18420"/>
        <label>2</label>
    </ligand>
</feature>
<feature type="binding site" evidence="1">
    <location>
        <position position="16"/>
    </location>
    <ligand>
        <name>substrate</name>
    </ligand>
</feature>
<feature type="binding site" evidence="1">
    <location>
        <position position="30"/>
    </location>
    <ligand>
        <name>substrate</name>
    </ligand>
</feature>
<feature type="binding site" evidence="1">
    <location>
        <position position="42"/>
    </location>
    <ligand>
        <name>substrate</name>
    </ligand>
</feature>
<feature type="binding site" evidence="1">
    <location>
        <position position="52"/>
    </location>
    <ligand>
        <name>Mg(2+)</name>
        <dbReference type="ChEBI" id="CHEBI:18420"/>
        <label>1</label>
    </ligand>
</feature>
<feature type="binding site" evidence="1">
    <location>
        <position position="57"/>
    </location>
    <ligand>
        <name>Mg(2+)</name>
        <dbReference type="ChEBI" id="CHEBI:18420"/>
        <label>1</label>
    </ligand>
</feature>
<feature type="binding site" evidence="1">
    <location>
        <position position="57"/>
    </location>
    <ligand>
        <name>Mg(2+)</name>
        <dbReference type="ChEBI" id="CHEBI:18420"/>
        <label>2</label>
    </ligand>
</feature>
<feature type="binding site" evidence="1">
    <location>
        <position position="84"/>
    </location>
    <ligand>
        <name>Mg(2+)</name>
        <dbReference type="ChEBI" id="CHEBI:18420"/>
        <label>3</label>
    </ligand>
</feature>
<feature type="binding site" evidence="1">
    <location>
        <position position="89"/>
    </location>
    <ligand>
        <name>Mg(2+)</name>
        <dbReference type="ChEBI" id="CHEBI:18420"/>
        <label>1</label>
    </ligand>
</feature>
<feature type="binding site" evidence="1">
    <location>
        <position position="89"/>
    </location>
    <ligand>
        <name>Mg(2+)</name>
        <dbReference type="ChEBI" id="CHEBI:18420"/>
        <label>3</label>
    </ligand>
</feature>
<feature type="binding site" evidence="1">
    <location>
        <position position="126"/>
    </location>
    <ligand>
        <name>substrate</name>
    </ligand>
</feature>
<feature type="strand" evidence="2">
    <location>
        <begin position="3"/>
        <end position="9"/>
    </location>
</feature>
<feature type="strand" evidence="2">
    <location>
        <begin position="15"/>
        <end position="19"/>
    </location>
</feature>
<feature type="turn" evidence="2">
    <location>
        <begin position="21"/>
        <end position="23"/>
    </location>
</feature>
<feature type="strand" evidence="2">
    <location>
        <begin position="26"/>
        <end position="31"/>
    </location>
</feature>
<feature type="strand" evidence="2">
    <location>
        <begin position="33"/>
        <end position="36"/>
    </location>
</feature>
<feature type="strand" evidence="2">
    <location>
        <begin position="39"/>
        <end position="45"/>
    </location>
</feature>
<feature type="strand" evidence="2">
    <location>
        <begin position="57"/>
        <end position="60"/>
    </location>
</feature>
<feature type="strand" evidence="2">
    <location>
        <begin position="71"/>
        <end position="84"/>
    </location>
</feature>
<feature type="strand" evidence="2">
    <location>
        <begin position="87"/>
        <end position="98"/>
    </location>
</feature>
<feature type="helix" evidence="2">
    <location>
        <begin position="100"/>
        <end position="102"/>
    </location>
</feature>
<feature type="helix" evidence="2">
    <location>
        <begin position="108"/>
        <end position="110"/>
    </location>
</feature>
<feature type="helix" evidence="2">
    <location>
        <begin position="113"/>
        <end position="125"/>
    </location>
</feature>
<feature type="turn" evidence="2">
    <location>
        <begin position="126"/>
        <end position="129"/>
    </location>
</feature>
<feature type="strand" evidence="2">
    <location>
        <begin position="135"/>
        <end position="142"/>
    </location>
</feature>
<feature type="helix" evidence="2">
    <location>
        <begin position="143"/>
        <end position="158"/>
    </location>
</feature>
<proteinExistence type="evidence at protein level"/>
<sequence>MQFDVTIEIPKGQRNKYEVDHKTGRVRLDRYLYTPMAYPTDYGFIEDTLGEDGDPLDALVLLPEPLFPGVLVEARPVGMFRMVDEHGGDDKVLCVPVNDHRWDHIHGIIDVPTFELDAIKHFFVHYKDLEPGKFVKAADWVGRDEAEAEVQRSVERFKAGGH</sequence>
<comment type="function">
    <text evidence="1">Catalyzes the hydrolysis of inorganic pyrophosphate (PPi) forming two phosphate ions.</text>
</comment>
<comment type="catalytic activity">
    <reaction evidence="1">
        <text>diphosphate + H2O = 2 phosphate + H(+)</text>
        <dbReference type="Rhea" id="RHEA:24576"/>
        <dbReference type="ChEBI" id="CHEBI:15377"/>
        <dbReference type="ChEBI" id="CHEBI:15378"/>
        <dbReference type="ChEBI" id="CHEBI:33019"/>
        <dbReference type="ChEBI" id="CHEBI:43474"/>
        <dbReference type="EC" id="3.6.1.1"/>
    </reaction>
</comment>
<comment type="cofactor">
    <cofactor evidence="1">
        <name>Mg(2+)</name>
        <dbReference type="ChEBI" id="CHEBI:18420"/>
    </cofactor>
</comment>
<comment type="subunit">
    <text evidence="1">Homohexamer.</text>
</comment>
<comment type="subcellular location">
    <subcellularLocation>
        <location evidence="1">Cytoplasm</location>
    </subcellularLocation>
</comment>
<comment type="similarity">
    <text evidence="1">Belongs to the PPase family.</text>
</comment>
<protein>
    <recommendedName>
        <fullName evidence="1">Inorganic pyrophosphatase</fullName>
        <ecNumber evidence="1">3.6.1.1</ecNumber>
    </recommendedName>
    <alternativeName>
        <fullName evidence="1">Pyrophosphate phospho-hydrolase</fullName>
        <shortName evidence="1">PPase</shortName>
    </alternativeName>
</protein>
<organism>
    <name type="scientific">Mycobacterium leprae (strain TN)</name>
    <dbReference type="NCBI Taxonomy" id="272631"/>
    <lineage>
        <taxon>Bacteria</taxon>
        <taxon>Bacillati</taxon>
        <taxon>Actinomycetota</taxon>
        <taxon>Actinomycetes</taxon>
        <taxon>Mycobacteriales</taxon>
        <taxon>Mycobacteriaceae</taxon>
        <taxon>Mycobacterium</taxon>
    </lineage>
</organism>
<reference key="1">
    <citation type="journal article" date="2001" name="Nature">
        <title>Massive gene decay in the leprosy bacillus.</title>
        <authorList>
            <person name="Cole S.T."/>
            <person name="Eiglmeier K."/>
            <person name="Parkhill J."/>
            <person name="James K.D."/>
            <person name="Thomson N.R."/>
            <person name="Wheeler P.R."/>
            <person name="Honore N."/>
            <person name="Garnier T."/>
            <person name="Churcher C.M."/>
            <person name="Harris D.E."/>
            <person name="Mungall K.L."/>
            <person name="Basham D."/>
            <person name="Brown D."/>
            <person name="Chillingworth T."/>
            <person name="Connor R."/>
            <person name="Davies R.M."/>
            <person name="Devlin K."/>
            <person name="Duthoy S."/>
            <person name="Feltwell T."/>
            <person name="Fraser A."/>
            <person name="Hamlin N."/>
            <person name="Holroyd S."/>
            <person name="Hornsby T."/>
            <person name="Jagels K."/>
            <person name="Lacroix C."/>
            <person name="Maclean J."/>
            <person name="Moule S."/>
            <person name="Murphy L.D."/>
            <person name="Oliver K."/>
            <person name="Quail M.A."/>
            <person name="Rajandream M.A."/>
            <person name="Rutherford K.M."/>
            <person name="Rutter S."/>
            <person name="Seeger K."/>
            <person name="Simon S."/>
            <person name="Simmonds M."/>
            <person name="Skelton J."/>
            <person name="Squares R."/>
            <person name="Squares S."/>
            <person name="Stevens K."/>
            <person name="Taylor K."/>
            <person name="Whitehead S."/>
            <person name="Woodward J.R."/>
            <person name="Barrell B.G."/>
        </authorList>
    </citation>
    <scope>NUCLEOTIDE SEQUENCE [LARGE SCALE GENOMIC DNA]</scope>
    <source>
        <strain>TN</strain>
    </source>
</reference>